<organism>
    <name type="scientific">Actinobacillus pleuropneumoniae serotype 7 (strain AP76)</name>
    <dbReference type="NCBI Taxonomy" id="537457"/>
    <lineage>
        <taxon>Bacteria</taxon>
        <taxon>Pseudomonadati</taxon>
        <taxon>Pseudomonadota</taxon>
        <taxon>Gammaproteobacteria</taxon>
        <taxon>Pasteurellales</taxon>
        <taxon>Pasteurellaceae</taxon>
        <taxon>Actinobacillus</taxon>
    </lineage>
</organism>
<accession>B3GZK9</accession>
<name>MURC_ACTP7</name>
<gene>
    <name evidence="1" type="primary">murC</name>
    <name type="ordered locus">APP7_0019</name>
</gene>
<sequence>MKNFQDKIKKLVPEMRRVNQIHFIGIGGAGMSGIAEVLLNEGYQISGSDIAEGPVTKRLAEAGAKVFIGHQAENVAGASVVVASSAIDDSNPEVRAAKEARIPVIQRAQMLAEIMRFRHGIAVAGTHGKTTTTAMISMIYTEAKLDPTFVNGGLVKSAGKNAHLGASRYLIAEADESDASFLHLQPMVSVVTNIEPDHMDTYGGDFEQMKATYVKFLRNLPFYGLAVMCADDETVMEIAPQVGRQVLTYGFSEKADYRIEDYQQTGFQGHYTVVCPNGERIDVLLNVPGKHNALNATAALAVAKEEGIANEAILAALADFQGAGRRFDQLGSFIRPNGKVMLVDDYGHHPTEVDVTIKAARSGWENKRVVMIFQPHRYSRTRDLFDDFVQVLSQVDALIMLEVYAAGEAPIVGADSKALCRSIRNLGKVDPILVSDTDQLGEVLDQIIQDGDLILAQGAGSVSRISRGLAESWKA</sequence>
<dbReference type="EC" id="6.3.2.8" evidence="1"/>
<dbReference type="EMBL" id="CP001091">
    <property type="protein sequence ID" value="ACE60671.1"/>
    <property type="molecule type" value="Genomic_DNA"/>
</dbReference>
<dbReference type="RefSeq" id="WP_005616513.1">
    <property type="nucleotide sequence ID" value="NC_010939.1"/>
</dbReference>
<dbReference type="SMR" id="B3GZK9"/>
<dbReference type="KEGG" id="apa:APP7_0019"/>
<dbReference type="HOGENOM" id="CLU_028104_2_2_6"/>
<dbReference type="UniPathway" id="UPA00219"/>
<dbReference type="Proteomes" id="UP000001226">
    <property type="component" value="Chromosome"/>
</dbReference>
<dbReference type="GO" id="GO:0005737">
    <property type="term" value="C:cytoplasm"/>
    <property type="evidence" value="ECO:0007669"/>
    <property type="project" value="UniProtKB-SubCell"/>
</dbReference>
<dbReference type="GO" id="GO:0005524">
    <property type="term" value="F:ATP binding"/>
    <property type="evidence" value="ECO:0007669"/>
    <property type="project" value="UniProtKB-UniRule"/>
</dbReference>
<dbReference type="GO" id="GO:0008763">
    <property type="term" value="F:UDP-N-acetylmuramate-L-alanine ligase activity"/>
    <property type="evidence" value="ECO:0007669"/>
    <property type="project" value="UniProtKB-UniRule"/>
</dbReference>
<dbReference type="GO" id="GO:0051301">
    <property type="term" value="P:cell division"/>
    <property type="evidence" value="ECO:0007669"/>
    <property type="project" value="UniProtKB-KW"/>
</dbReference>
<dbReference type="GO" id="GO:0071555">
    <property type="term" value="P:cell wall organization"/>
    <property type="evidence" value="ECO:0007669"/>
    <property type="project" value="UniProtKB-KW"/>
</dbReference>
<dbReference type="GO" id="GO:0009252">
    <property type="term" value="P:peptidoglycan biosynthetic process"/>
    <property type="evidence" value="ECO:0007669"/>
    <property type="project" value="UniProtKB-UniRule"/>
</dbReference>
<dbReference type="GO" id="GO:0008360">
    <property type="term" value="P:regulation of cell shape"/>
    <property type="evidence" value="ECO:0007669"/>
    <property type="project" value="UniProtKB-KW"/>
</dbReference>
<dbReference type="FunFam" id="3.40.1190.10:FF:000001">
    <property type="entry name" value="UDP-N-acetylmuramate--L-alanine ligase"/>
    <property type="match status" value="1"/>
</dbReference>
<dbReference type="FunFam" id="3.40.50.720:FF:000046">
    <property type="entry name" value="UDP-N-acetylmuramate--L-alanine ligase"/>
    <property type="match status" value="1"/>
</dbReference>
<dbReference type="Gene3D" id="3.90.190.20">
    <property type="entry name" value="Mur ligase, C-terminal domain"/>
    <property type="match status" value="1"/>
</dbReference>
<dbReference type="Gene3D" id="3.40.1190.10">
    <property type="entry name" value="Mur-like, catalytic domain"/>
    <property type="match status" value="1"/>
</dbReference>
<dbReference type="Gene3D" id="3.40.50.720">
    <property type="entry name" value="NAD(P)-binding Rossmann-like Domain"/>
    <property type="match status" value="1"/>
</dbReference>
<dbReference type="HAMAP" id="MF_00046">
    <property type="entry name" value="MurC"/>
    <property type="match status" value="1"/>
</dbReference>
<dbReference type="InterPro" id="IPR036565">
    <property type="entry name" value="Mur-like_cat_sf"/>
</dbReference>
<dbReference type="InterPro" id="IPR004101">
    <property type="entry name" value="Mur_ligase_C"/>
</dbReference>
<dbReference type="InterPro" id="IPR036615">
    <property type="entry name" value="Mur_ligase_C_dom_sf"/>
</dbReference>
<dbReference type="InterPro" id="IPR013221">
    <property type="entry name" value="Mur_ligase_cen"/>
</dbReference>
<dbReference type="InterPro" id="IPR000713">
    <property type="entry name" value="Mur_ligase_N"/>
</dbReference>
<dbReference type="InterPro" id="IPR050061">
    <property type="entry name" value="MurCDEF_pg_biosynth"/>
</dbReference>
<dbReference type="InterPro" id="IPR005758">
    <property type="entry name" value="UDP-N-AcMur_Ala_ligase_MurC"/>
</dbReference>
<dbReference type="NCBIfam" id="TIGR01082">
    <property type="entry name" value="murC"/>
    <property type="match status" value="1"/>
</dbReference>
<dbReference type="PANTHER" id="PTHR43445:SF3">
    <property type="entry name" value="UDP-N-ACETYLMURAMATE--L-ALANINE LIGASE"/>
    <property type="match status" value="1"/>
</dbReference>
<dbReference type="PANTHER" id="PTHR43445">
    <property type="entry name" value="UDP-N-ACETYLMURAMATE--L-ALANINE LIGASE-RELATED"/>
    <property type="match status" value="1"/>
</dbReference>
<dbReference type="Pfam" id="PF01225">
    <property type="entry name" value="Mur_ligase"/>
    <property type="match status" value="1"/>
</dbReference>
<dbReference type="Pfam" id="PF02875">
    <property type="entry name" value="Mur_ligase_C"/>
    <property type="match status" value="1"/>
</dbReference>
<dbReference type="Pfam" id="PF08245">
    <property type="entry name" value="Mur_ligase_M"/>
    <property type="match status" value="1"/>
</dbReference>
<dbReference type="SUPFAM" id="SSF51984">
    <property type="entry name" value="MurCD N-terminal domain"/>
    <property type="match status" value="1"/>
</dbReference>
<dbReference type="SUPFAM" id="SSF53623">
    <property type="entry name" value="MurD-like peptide ligases, catalytic domain"/>
    <property type="match status" value="1"/>
</dbReference>
<dbReference type="SUPFAM" id="SSF53244">
    <property type="entry name" value="MurD-like peptide ligases, peptide-binding domain"/>
    <property type="match status" value="1"/>
</dbReference>
<feature type="chain" id="PRO_1000091073" description="UDP-N-acetylmuramate--L-alanine ligase">
    <location>
        <begin position="1"/>
        <end position="475"/>
    </location>
</feature>
<feature type="binding site" evidence="1">
    <location>
        <begin position="125"/>
        <end position="131"/>
    </location>
    <ligand>
        <name>ATP</name>
        <dbReference type="ChEBI" id="CHEBI:30616"/>
    </ligand>
</feature>
<proteinExistence type="inferred from homology"/>
<comment type="function">
    <text evidence="1">Cell wall formation.</text>
</comment>
<comment type="catalytic activity">
    <reaction evidence="1">
        <text>UDP-N-acetyl-alpha-D-muramate + L-alanine + ATP = UDP-N-acetyl-alpha-D-muramoyl-L-alanine + ADP + phosphate + H(+)</text>
        <dbReference type="Rhea" id="RHEA:23372"/>
        <dbReference type="ChEBI" id="CHEBI:15378"/>
        <dbReference type="ChEBI" id="CHEBI:30616"/>
        <dbReference type="ChEBI" id="CHEBI:43474"/>
        <dbReference type="ChEBI" id="CHEBI:57972"/>
        <dbReference type="ChEBI" id="CHEBI:70757"/>
        <dbReference type="ChEBI" id="CHEBI:83898"/>
        <dbReference type="ChEBI" id="CHEBI:456216"/>
        <dbReference type="EC" id="6.3.2.8"/>
    </reaction>
</comment>
<comment type="pathway">
    <text evidence="1">Cell wall biogenesis; peptidoglycan biosynthesis.</text>
</comment>
<comment type="subcellular location">
    <subcellularLocation>
        <location evidence="1">Cytoplasm</location>
    </subcellularLocation>
</comment>
<comment type="similarity">
    <text evidence="1">Belongs to the MurCDEF family.</text>
</comment>
<reference key="1">
    <citation type="submission" date="2008-06" db="EMBL/GenBank/DDBJ databases">
        <title>Genome and proteome analysis of A. pleuropneumoniae serotype 7.</title>
        <authorList>
            <person name="Linke B."/>
            <person name="Buettner F."/>
            <person name="Martinez-Arias R."/>
            <person name="Goesmann A."/>
            <person name="Baltes N."/>
            <person name="Tegetmeyer H."/>
            <person name="Singh M."/>
            <person name="Gerlach G.F."/>
        </authorList>
    </citation>
    <scope>NUCLEOTIDE SEQUENCE [LARGE SCALE GENOMIC DNA]</scope>
    <source>
        <strain>AP76</strain>
    </source>
</reference>
<protein>
    <recommendedName>
        <fullName evidence="1">UDP-N-acetylmuramate--L-alanine ligase</fullName>
        <ecNumber evidence="1">6.3.2.8</ecNumber>
    </recommendedName>
    <alternativeName>
        <fullName evidence="1">UDP-N-acetylmuramoyl-L-alanine synthetase</fullName>
    </alternativeName>
</protein>
<evidence type="ECO:0000255" key="1">
    <source>
        <dbReference type="HAMAP-Rule" id="MF_00046"/>
    </source>
</evidence>
<keyword id="KW-0067">ATP-binding</keyword>
<keyword id="KW-0131">Cell cycle</keyword>
<keyword id="KW-0132">Cell division</keyword>
<keyword id="KW-0133">Cell shape</keyword>
<keyword id="KW-0961">Cell wall biogenesis/degradation</keyword>
<keyword id="KW-0963">Cytoplasm</keyword>
<keyword id="KW-0436">Ligase</keyword>
<keyword id="KW-0547">Nucleotide-binding</keyword>
<keyword id="KW-0573">Peptidoglycan synthesis</keyword>